<comment type="function">
    <text evidence="1">Binds directly to 23S rRNA. The L1 stalk is quite mobile in the ribosome, and is involved in E site tRNA release.</text>
</comment>
<comment type="function">
    <text evidence="1">Protein L1 is also a translational repressor protein, it controls the translation of the L11 operon by binding to its mRNA.</text>
</comment>
<comment type="subunit">
    <text evidence="1">Part of the 50S ribosomal subunit.</text>
</comment>
<comment type="similarity">
    <text evidence="1">Belongs to the universal ribosomal protein uL1 family.</text>
</comment>
<organism>
    <name type="scientific">Hamiltonella defensa subsp. Acyrthosiphon pisum (strain 5AT)</name>
    <dbReference type="NCBI Taxonomy" id="572265"/>
    <lineage>
        <taxon>Bacteria</taxon>
        <taxon>Pseudomonadati</taxon>
        <taxon>Pseudomonadota</taxon>
        <taxon>Gammaproteobacteria</taxon>
        <taxon>Enterobacterales</taxon>
        <taxon>Enterobacteriaceae</taxon>
        <taxon>aphid secondary symbionts</taxon>
        <taxon>Candidatus Hamiltonella</taxon>
    </lineage>
</organism>
<feature type="chain" id="PRO_1000214423" description="Large ribosomal subunit protein uL1">
    <location>
        <begin position="1"/>
        <end position="233"/>
    </location>
</feature>
<evidence type="ECO:0000255" key="1">
    <source>
        <dbReference type="HAMAP-Rule" id="MF_01318"/>
    </source>
</evidence>
<evidence type="ECO:0000305" key="2"/>
<keyword id="KW-0678">Repressor</keyword>
<keyword id="KW-0687">Ribonucleoprotein</keyword>
<keyword id="KW-0689">Ribosomal protein</keyword>
<keyword id="KW-0694">RNA-binding</keyword>
<keyword id="KW-0699">rRNA-binding</keyword>
<keyword id="KW-0810">Translation regulation</keyword>
<keyword id="KW-0820">tRNA-binding</keyword>
<proteinExistence type="inferred from homology"/>
<reference key="1">
    <citation type="journal article" date="2009" name="Proc. Natl. Acad. Sci. U.S.A.">
        <title>Hamiltonella defensa, genome evolution of protective bacterial endosymbiont from pathogenic ancestors.</title>
        <authorList>
            <person name="Degnan P.H."/>
            <person name="Yu Y."/>
            <person name="Sisneros N."/>
            <person name="Wing R.A."/>
            <person name="Moran N.A."/>
        </authorList>
    </citation>
    <scope>NUCLEOTIDE SEQUENCE [LARGE SCALE GENOMIC DNA]</scope>
    <source>
        <strain>5AT</strain>
    </source>
</reference>
<gene>
    <name evidence="1" type="primary">rplA</name>
    <name type="ordered locus">HDEF_0714</name>
</gene>
<sequence>MSKLSKRMRVIREKVDTAKQYDLDDAFLLLKKLATAKFTESVDVAVNLGIDARKSDQNVRGATVLPHGTGRSVRVAVFTQGANAEAANNAGAELVGMDDLAAQIRNGEMNFDVVIASPDAMRVVGQLGQILGPRGLMPNPKVGTVTPNIAEAVTNAKAGQIRYRNDKNGIIHTTIGKIDFDAHKLKENLEALISALKKAKPATAKGLYIKKISLSTTMGAGLMIDQSALSSLV</sequence>
<protein>
    <recommendedName>
        <fullName evidence="1">Large ribosomal subunit protein uL1</fullName>
    </recommendedName>
    <alternativeName>
        <fullName evidence="2">50S ribosomal protein L1</fullName>
    </alternativeName>
</protein>
<accession>C4K4F4</accession>
<dbReference type="EMBL" id="CP001277">
    <property type="protein sequence ID" value="ACQ67447.1"/>
    <property type="molecule type" value="Genomic_DNA"/>
</dbReference>
<dbReference type="RefSeq" id="WP_015873268.1">
    <property type="nucleotide sequence ID" value="NC_012751.1"/>
</dbReference>
<dbReference type="SMR" id="C4K4F4"/>
<dbReference type="STRING" id="572265.HDEF_0714"/>
<dbReference type="GeneID" id="66260567"/>
<dbReference type="KEGG" id="hde:HDEF_0714"/>
<dbReference type="eggNOG" id="COG0081">
    <property type="taxonomic scope" value="Bacteria"/>
</dbReference>
<dbReference type="HOGENOM" id="CLU_062853_0_0_6"/>
<dbReference type="Proteomes" id="UP000002334">
    <property type="component" value="Chromosome"/>
</dbReference>
<dbReference type="GO" id="GO:0022625">
    <property type="term" value="C:cytosolic large ribosomal subunit"/>
    <property type="evidence" value="ECO:0007669"/>
    <property type="project" value="TreeGrafter"/>
</dbReference>
<dbReference type="GO" id="GO:0019843">
    <property type="term" value="F:rRNA binding"/>
    <property type="evidence" value="ECO:0007669"/>
    <property type="project" value="UniProtKB-UniRule"/>
</dbReference>
<dbReference type="GO" id="GO:0003735">
    <property type="term" value="F:structural constituent of ribosome"/>
    <property type="evidence" value="ECO:0007669"/>
    <property type="project" value="InterPro"/>
</dbReference>
<dbReference type="GO" id="GO:0000049">
    <property type="term" value="F:tRNA binding"/>
    <property type="evidence" value="ECO:0007669"/>
    <property type="project" value="UniProtKB-KW"/>
</dbReference>
<dbReference type="GO" id="GO:0006417">
    <property type="term" value="P:regulation of translation"/>
    <property type="evidence" value="ECO:0007669"/>
    <property type="project" value="UniProtKB-KW"/>
</dbReference>
<dbReference type="GO" id="GO:0006412">
    <property type="term" value="P:translation"/>
    <property type="evidence" value="ECO:0007669"/>
    <property type="project" value="UniProtKB-UniRule"/>
</dbReference>
<dbReference type="CDD" id="cd00403">
    <property type="entry name" value="Ribosomal_L1"/>
    <property type="match status" value="1"/>
</dbReference>
<dbReference type="FunFam" id="3.40.50.790:FF:000001">
    <property type="entry name" value="50S ribosomal protein L1"/>
    <property type="match status" value="1"/>
</dbReference>
<dbReference type="Gene3D" id="3.30.190.20">
    <property type="match status" value="1"/>
</dbReference>
<dbReference type="Gene3D" id="3.40.50.790">
    <property type="match status" value="1"/>
</dbReference>
<dbReference type="HAMAP" id="MF_01318_B">
    <property type="entry name" value="Ribosomal_uL1_B"/>
    <property type="match status" value="1"/>
</dbReference>
<dbReference type="InterPro" id="IPR005878">
    <property type="entry name" value="Ribosom_uL1_bac-type"/>
</dbReference>
<dbReference type="InterPro" id="IPR002143">
    <property type="entry name" value="Ribosomal_uL1"/>
</dbReference>
<dbReference type="InterPro" id="IPR023674">
    <property type="entry name" value="Ribosomal_uL1-like"/>
</dbReference>
<dbReference type="InterPro" id="IPR028364">
    <property type="entry name" value="Ribosomal_uL1/biogenesis"/>
</dbReference>
<dbReference type="InterPro" id="IPR016095">
    <property type="entry name" value="Ribosomal_uL1_3-a/b-sand"/>
</dbReference>
<dbReference type="InterPro" id="IPR023673">
    <property type="entry name" value="Ribosomal_uL1_CS"/>
</dbReference>
<dbReference type="NCBIfam" id="TIGR01169">
    <property type="entry name" value="rplA_bact"/>
    <property type="match status" value="1"/>
</dbReference>
<dbReference type="PANTHER" id="PTHR36427">
    <property type="entry name" value="54S RIBOSOMAL PROTEIN L1, MITOCHONDRIAL"/>
    <property type="match status" value="1"/>
</dbReference>
<dbReference type="PANTHER" id="PTHR36427:SF3">
    <property type="entry name" value="LARGE RIBOSOMAL SUBUNIT PROTEIN UL1M"/>
    <property type="match status" value="1"/>
</dbReference>
<dbReference type="Pfam" id="PF00687">
    <property type="entry name" value="Ribosomal_L1"/>
    <property type="match status" value="1"/>
</dbReference>
<dbReference type="PIRSF" id="PIRSF002155">
    <property type="entry name" value="Ribosomal_L1"/>
    <property type="match status" value="1"/>
</dbReference>
<dbReference type="SUPFAM" id="SSF56808">
    <property type="entry name" value="Ribosomal protein L1"/>
    <property type="match status" value="1"/>
</dbReference>
<dbReference type="PROSITE" id="PS01199">
    <property type="entry name" value="RIBOSOMAL_L1"/>
    <property type="match status" value="1"/>
</dbReference>
<name>RL1_HAMD5</name>